<keyword id="KW-0067">ATP-binding</keyword>
<keyword id="KW-0342">GTP-binding</keyword>
<keyword id="KW-0547">Nucleotide-binding</keyword>
<keyword id="KW-1185">Reference proteome</keyword>
<sequence>MEIIIISGRSGAGKSVALRALEDAGYYCVDNIPLDLLPQLTDILSQSQSSVAISLDIRNIPNSAHSLKQTLSTLQKHHQIKIIFLEADRATLIRRYSDSRRLHPLSLKDLSLEAAIDEEYRYLEPLIQHANLILDTTHLSTHSLAERLREFLRGNSEKELKIIVESFGFKYGIPLDADYVFDVRFLPNPHWDPTLRPMTGLEAPVAEFLNSHTEVNEFIYLTRHYIDTWLPMLEKNNRSYLTIAIGCTGGKHRSVYIAQQLGEYFQAKGKTVKIQHKSLERNKKI</sequence>
<evidence type="ECO:0000255" key="1">
    <source>
        <dbReference type="HAMAP-Rule" id="MF_00636"/>
    </source>
</evidence>
<evidence type="ECO:0000305" key="2"/>
<dbReference type="EMBL" id="L42023">
    <property type="protein sequence ID" value="AAC22801.1"/>
    <property type="status" value="ALT_INIT"/>
    <property type="molecule type" value="Genomic_DNA"/>
</dbReference>
<dbReference type="PIR" id="G64167">
    <property type="entry name" value="G64167"/>
</dbReference>
<dbReference type="RefSeq" id="NP_439304.2">
    <property type="nucleotide sequence ID" value="NC_000907.1"/>
</dbReference>
<dbReference type="SMR" id="P45071"/>
<dbReference type="STRING" id="71421.HI_1146"/>
<dbReference type="EnsemblBacteria" id="AAC22801">
    <property type="protein sequence ID" value="AAC22801"/>
    <property type="gene ID" value="HI_1146"/>
</dbReference>
<dbReference type="KEGG" id="hin:HI_1146"/>
<dbReference type="PATRIC" id="fig|71421.8.peg.1196"/>
<dbReference type="eggNOG" id="COG1660">
    <property type="taxonomic scope" value="Bacteria"/>
</dbReference>
<dbReference type="HOGENOM" id="CLU_059558_1_1_6"/>
<dbReference type="OrthoDB" id="9784461at2"/>
<dbReference type="PhylomeDB" id="P45071"/>
<dbReference type="BioCyc" id="HINF71421:G1GJ1-1179-MONOMER"/>
<dbReference type="Proteomes" id="UP000000579">
    <property type="component" value="Chromosome"/>
</dbReference>
<dbReference type="GO" id="GO:0005524">
    <property type="term" value="F:ATP binding"/>
    <property type="evidence" value="ECO:0007669"/>
    <property type="project" value="UniProtKB-UniRule"/>
</dbReference>
<dbReference type="GO" id="GO:0005525">
    <property type="term" value="F:GTP binding"/>
    <property type="evidence" value="ECO:0007669"/>
    <property type="project" value="UniProtKB-UniRule"/>
</dbReference>
<dbReference type="GO" id="GO:0060090">
    <property type="term" value="F:molecular adaptor activity"/>
    <property type="evidence" value="ECO:0000318"/>
    <property type="project" value="GO_Central"/>
</dbReference>
<dbReference type="Gene3D" id="3.40.50.300">
    <property type="entry name" value="P-loop containing nucleotide triphosphate hydrolases"/>
    <property type="match status" value="1"/>
</dbReference>
<dbReference type="HAMAP" id="MF_00636">
    <property type="entry name" value="RapZ_like"/>
    <property type="match status" value="1"/>
</dbReference>
<dbReference type="InterPro" id="IPR027417">
    <property type="entry name" value="P-loop_NTPase"/>
</dbReference>
<dbReference type="InterPro" id="IPR005337">
    <property type="entry name" value="RapZ-like"/>
</dbReference>
<dbReference type="InterPro" id="IPR053930">
    <property type="entry name" value="RapZ-like_N"/>
</dbReference>
<dbReference type="InterPro" id="IPR053931">
    <property type="entry name" value="RapZ_C"/>
</dbReference>
<dbReference type="NCBIfam" id="NF003828">
    <property type="entry name" value="PRK05416.1"/>
    <property type="match status" value="1"/>
</dbReference>
<dbReference type="PANTHER" id="PTHR30448">
    <property type="entry name" value="RNASE ADAPTER PROTEIN RAPZ"/>
    <property type="match status" value="1"/>
</dbReference>
<dbReference type="PANTHER" id="PTHR30448:SF0">
    <property type="entry name" value="RNASE ADAPTER PROTEIN RAPZ"/>
    <property type="match status" value="1"/>
</dbReference>
<dbReference type="Pfam" id="PF22740">
    <property type="entry name" value="PapZ_C"/>
    <property type="match status" value="1"/>
</dbReference>
<dbReference type="Pfam" id="PF03668">
    <property type="entry name" value="RapZ-like_N"/>
    <property type="match status" value="1"/>
</dbReference>
<dbReference type="PIRSF" id="PIRSF005052">
    <property type="entry name" value="P-loopkin"/>
    <property type="match status" value="1"/>
</dbReference>
<dbReference type="SUPFAM" id="SSF52540">
    <property type="entry name" value="P-loop containing nucleoside triphosphate hydrolases"/>
    <property type="match status" value="1"/>
</dbReference>
<comment type="function">
    <text evidence="1">Displays ATPase and GTPase activities.</text>
</comment>
<comment type="similarity">
    <text evidence="1">Belongs to the RapZ-like family.</text>
</comment>
<comment type="sequence caution" evidence="2">
    <conflict type="erroneous initiation">
        <sequence resource="EMBL-CDS" id="AAC22801"/>
    </conflict>
</comment>
<organism>
    <name type="scientific">Haemophilus influenzae (strain ATCC 51907 / DSM 11121 / KW20 / Rd)</name>
    <dbReference type="NCBI Taxonomy" id="71421"/>
    <lineage>
        <taxon>Bacteria</taxon>
        <taxon>Pseudomonadati</taxon>
        <taxon>Pseudomonadota</taxon>
        <taxon>Gammaproteobacteria</taxon>
        <taxon>Pasteurellales</taxon>
        <taxon>Pasteurellaceae</taxon>
        <taxon>Haemophilus</taxon>
    </lineage>
</organism>
<proteinExistence type="inferred from homology"/>
<gene>
    <name type="ordered locus">HI_1146</name>
</gene>
<reference key="1">
    <citation type="journal article" date="1995" name="Science">
        <title>Whole-genome random sequencing and assembly of Haemophilus influenzae Rd.</title>
        <authorList>
            <person name="Fleischmann R.D."/>
            <person name="Adams M.D."/>
            <person name="White O."/>
            <person name="Clayton R.A."/>
            <person name="Kirkness E.F."/>
            <person name="Kerlavage A.R."/>
            <person name="Bult C.J."/>
            <person name="Tomb J.-F."/>
            <person name="Dougherty B.A."/>
            <person name="Merrick J.M."/>
            <person name="McKenney K."/>
            <person name="Sutton G.G."/>
            <person name="FitzHugh W."/>
            <person name="Fields C.A."/>
            <person name="Gocayne J.D."/>
            <person name="Scott J.D."/>
            <person name="Shirley R."/>
            <person name="Liu L.-I."/>
            <person name="Glodek A."/>
            <person name="Kelley J.M."/>
            <person name="Weidman J.F."/>
            <person name="Phillips C.A."/>
            <person name="Spriggs T."/>
            <person name="Hedblom E."/>
            <person name="Cotton M.D."/>
            <person name="Utterback T.R."/>
            <person name="Hanna M.C."/>
            <person name="Nguyen D.T."/>
            <person name="Saudek D.M."/>
            <person name="Brandon R.C."/>
            <person name="Fine L.D."/>
            <person name="Fritchman J.L."/>
            <person name="Fuhrmann J.L."/>
            <person name="Geoghagen N.S.M."/>
            <person name="Gnehm C.L."/>
            <person name="McDonald L.A."/>
            <person name="Small K.V."/>
            <person name="Fraser C.M."/>
            <person name="Smith H.O."/>
            <person name="Venter J.C."/>
        </authorList>
    </citation>
    <scope>NUCLEOTIDE SEQUENCE [LARGE SCALE GENOMIC DNA]</scope>
    <source>
        <strain>ATCC 51907 / DSM 11121 / KW20 / Rd</strain>
    </source>
</reference>
<protein>
    <recommendedName>
        <fullName evidence="1">Nucleotide-binding protein HI_1146</fullName>
    </recommendedName>
</protein>
<name>Y1146_HAEIN</name>
<feature type="chain" id="PRO_0000107716" description="Nucleotide-binding protein HI_1146">
    <location>
        <begin position="1"/>
        <end position="285"/>
    </location>
</feature>
<feature type="binding site" evidence="1">
    <location>
        <begin position="8"/>
        <end position="15"/>
    </location>
    <ligand>
        <name>ATP</name>
        <dbReference type="ChEBI" id="CHEBI:30616"/>
    </ligand>
</feature>
<feature type="binding site" evidence="1">
    <location>
        <begin position="56"/>
        <end position="59"/>
    </location>
    <ligand>
        <name>GTP</name>
        <dbReference type="ChEBI" id="CHEBI:37565"/>
    </ligand>
</feature>
<accession>P45071</accession>